<accession>P60232</accession>
<accession>D9PXZ7</accession>
<accession>Q9UWM4</accession>
<evidence type="ECO:0000255" key="1"/>
<evidence type="ECO:0000255" key="2">
    <source>
        <dbReference type="PROSITE-ProRule" id="PRU00711"/>
    </source>
</evidence>
<evidence type="ECO:0000305" key="3"/>
<keyword id="KW-0004">4Fe-4S</keyword>
<keyword id="KW-0903">Direct protein sequencing</keyword>
<keyword id="KW-0249">Electron transport</keyword>
<keyword id="KW-0408">Iron</keyword>
<keyword id="KW-0411">Iron-sulfur</keyword>
<keyword id="KW-0479">Metal-binding</keyword>
<keyword id="KW-0677">Repeat</keyword>
<keyword id="KW-0813">Transport</keyword>
<name>MVHB_METTM</name>
<dbReference type="EMBL" id="CP001710">
    <property type="protein sequence ID" value="ADL59095.1"/>
    <property type="molecule type" value="Genomic_DNA"/>
</dbReference>
<dbReference type="RefSeq" id="WP_013296306.1">
    <property type="nucleotide sequence ID" value="NC_014408.1"/>
</dbReference>
<dbReference type="SMR" id="P60232"/>
<dbReference type="STRING" id="79929.MTBMA_c15160"/>
<dbReference type="PaxDb" id="79929-MTBMA_c15160"/>
<dbReference type="GeneID" id="77400288"/>
<dbReference type="GeneID" id="9705225"/>
<dbReference type="KEGG" id="mmg:MTBMA_c15160"/>
<dbReference type="PATRIC" id="fig|79929.8.peg.1469"/>
<dbReference type="HOGENOM" id="CLU_693748_0_0_2"/>
<dbReference type="OrthoDB" id="23833at2157"/>
<dbReference type="Proteomes" id="UP000000345">
    <property type="component" value="Chromosome"/>
</dbReference>
<dbReference type="GO" id="GO:0051539">
    <property type="term" value="F:4 iron, 4 sulfur cluster binding"/>
    <property type="evidence" value="ECO:0007669"/>
    <property type="project" value="UniProtKB-KW"/>
</dbReference>
<dbReference type="GO" id="GO:0009055">
    <property type="term" value="F:electron transfer activity"/>
    <property type="evidence" value="ECO:0007669"/>
    <property type="project" value="InterPro"/>
</dbReference>
<dbReference type="GO" id="GO:0005506">
    <property type="term" value="F:iron ion binding"/>
    <property type="evidence" value="ECO:0007669"/>
    <property type="project" value="InterPro"/>
</dbReference>
<dbReference type="GO" id="GO:0016491">
    <property type="term" value="F:oxidoreductase activity"/>
    <property type="evidence" value="ECO:0007669"/>
    <property type="project" value="UniProtKB-ARBA"/>
</dbReference>
<dbReference type="CDD" id="cd10549">
    <property type="entry name" value="MtMvhB_like"/>
    <property type="match status" value="3"/>
</dbReference>
<dbReference type="Gene3D" id="3.30.70.20">
    <property type="match status" value="7"/>
</dbReference>
<dbReference type="InterPro" id="IPR001080">
    <property type="entry name" value="3Fe4S_ferredoxin"/>
</dbReference>
<dbReference type="InterPro" id="IPR017896">
    <property type="entry name" value="4Fe4S_Fe-S-bd"/>
</dbReference>
<dbReference type="InterPro" id="IPR017900">
    <property type="entry name" value="4Fe4S_Fe_S_CS"/>
</dbReference>
<dbReference type="InterPro" id="IPR050572">
    <property type="entry name" value="Fe-S_Ferredoxin"/>
</dbReference>
<dbReference type="PANTHER" id="PTHR43687">
    <property type="entry name" value="ADENYLYLSULFATE REDUCTASE, BETA SUBUNIT"/>
    <property type="match status" value="1"/>
</dbReference>
<dbReference type="PANTHER" id="PTHR43687:SF1">
    <property type="entry name" value="FERREDOXIN III"/>
    <property type="match status" value="1"/>
</dbReference>
<dbReference type="Pfam" id="PF00037">
    <property type="entry name" value="Fer4"/>
    <property type="match status" value="1"/>
</dbReference>
<dbReference type="Pfam" id="PF12798">
    <property type="entry name" value="Fer4_3"/>
    <property type="match status" value="1"/>
</dbReference>
<dbReference type="Pfam" id="PF12838">
    <property type="entry name" value="Fer4_7"/>
    <property type="match status" value="5"/>
</dbReference>
<dbReference type="PRINTS" id="PR00352">
    <property type="entry name" value="3FE4SFRDOXIN"/>
</dbReference>
<dbReference type="SUPFAM" id="SSF54862">
    <property type="entry name" value="4Fe-4S ferredoxins"/>
    <property type="match status" value="3"/>
</dbReference>
<dbReference type="PROSITE" id="PS00198">
    <property type="entry name" value="4FE4S_FER_1"/>
    <property type="match status" value="10"/>
</dbReference>
<dbReference type="PROSITE" id="PS51379">
    <property type="entry name" value="4FE4S_FER_2"/>
    <property type="match status" value="12"/>
</dbReference>
<sequence>MIVVNKEDCIRCGACQGTCPTAAIEVTPEDVIYCDICGGEPKCVDACPTGALKIEDLVVDEAGNTQGRIVFNPDKCNECGDCVEVCPPQILKLDEGKVKKIPLQGFCVMCQKCVDICPVGVIGVEGIKEPAKVELEIEGPIFIADCVGCGMCVPECPVDAITLEKVGGVIEIDEDTCIKCGVCAQTCPWNAVYISGKKPEKRAKEIRKFELDEEACIGCNTCVEACPGDFIVPKSSNLTVELPAICTACGLCEQLCPVDAIDLDVELGPAKPASEEGLVWDEGKCDFIGACANICPNDAIRVVTREGMKLPDNEKVDEEPSFAMCTRCGACTMACPKGALSLVDMDKVIDGEVVKRKRVQYNPALCDQCGDCIEACPYDMLKLTDEKVPLKGFCILCDQCIPACPKGALSLK</sequence>
<comment type="cofactor">
    <cofactor evidence="3">
        <name>[4Fe-4S] cluster</name>
        <dbReference type="ChEBI" id="CHEBI:49883"/>
    </cofactor>
    <text evidence="3">Binds 12 [4Fe-4S] clusters.</text>
</comment>
<protein>
    <recommendedName>
        <fullName>Polyferredoxin protein MvhB</fullName>
    </recommendedName>
</protein>
<organism>
    <name type="scientific">Methanothermobacter marburgensis (strain ATCC BAA-927 / DSM 2133 / JCM 14651 / NBRC 100331 / OCM 82 / Marburg)</name>
    <name type="common">Methanobacterium thermoautotrophicum</name>
    <dbReference type="NCBI Taxonomy" id="79929"/>
    <lineage>
        <taxon>Archaea</taxon>
        <taxon>Methanobacteriati</taxon>
        <taxon>Methanobacteriota</taxon>
        <taxon>Methanomada group</taxon>
        <taxon>Methanobacteria</taxon>
        <taxon>Methanobacteriales</taxon>
        <taxon>Methanobacteriaceae</taxon>
        <taxon>Methanothermobacter</taxon>
    </lineage>
</organism>
<gene>
    <name type="primary">mvhB</name>
    <name type="ordered locus">MTBMA_c15160</name>
</gene>
<reference key="1">
    <citation type="journal article" date="2010" name="J. Bacteriol.">
        <title>Complete genome sequence of Methanothermobacter marburgensis, a methanoarchaeon model organism.</title>
        <authorList>
            <person name="Liesegang H."/>
            <person name="Kaster A.K."/>
            <person name="Wiezer A."/>
            <person name="Goenrich M."/>
            <person name="Wollherr A."/>
            <person name="Seedorf H."/>
            <person name="Gottschalk G."/>
            <person name="Thauer R.K."/>
        </authorList>
    </citation>
    <scope>NUCLEOTIDE SEQUENCE [LARGE SCALE GENOMIC DNA]</scope>
    <source>
        <strain>ATCC BAA-927 / DSM 2133 / JCM 14651 / NBRC 100331 / OCM 82 / Marburg</strain>
    </source>
</reference>
<reference key="2">
    <citation type="journal article" date="1992" name="FEBS Lett.">
        <title>Isolation and characterization of polyferredoxin from Methanobacterium thermoautotrophicum. The mvhB gene product of the methylviologen-reducing hydrogenase operon.</title>
        <authorList>
            <person name="Hedderich R."/>
            <person name="Albracht S.P.J."/>
            <person name="Linder D."/>
            <person name="Koch J."/>
            <person name="Thauer R.K."/>
        </authorList>
    </citation>
    <scope>PROTEIN SEQUENCE OF 1-28</scope>
    <scope>COFACTOR</scope>
    <source>
        <strain>ATCC BAA-927 / DSM 2133 / JCM 14651 / NBRC 100331 / OCM 82 / Marburg</strain>
    </source>
</reference>
<proteinExistence type="evidence at protein level"/>
<feature type="chain" id="PRO_0000159144" description="Polyferredoxin protein MvhB">
    <location>
        <begin position="1"/>
        <end position="412"/>
    </location>
</feature>
<feature type="domain" description="4Fe-4S ferredoxin-type 1" evidence="2">
    <location>
        <begin position="1"/>
        <end position="29"/>
    </location>
</feature>
<feature type="domain" description="4Fe-4S ferredoxin-type 2" evidence="2">
    <location>
        <begin position="30"/>
        <end position="57"/>
    </location>
</feature>
<feature type="domain" description="4Fe-4S ferredoxin-type 3" evidence="2">
    <location>
        <begin position="67"/>
        <end position="96"/>
    </location>
</feature>
<feature type="domain" description="4Fe-4S ferredoxin-type 4" evidence="2">
    <location>
        <begin position="97"/>
        <end position="127"/>
    </location>
</feature>
<feature type="domain" description="4Fe-4S ferredoxin-type 5" evidence="2">
    <location>
        <begin position="138"/>
        <end position="166"/>
    </location>
</feature>
<feature type="domain" description="4Fe-4S ferredoxin-type 6" evidence="2">
    <location>
        <begin position="168"/>
        <end position="197"/>
    </location>
</feature>
<feature type="domain" description="4Fe-4S ferredoxin-type 7" evidence="2">
    <location>
        <begin position="207"/>
        <end position="236"/>
    </location>
</feature>
<feature type="domain" description="4Fe-4S ferredoxin-type 8" evidence="2">
    <location>
        <begin position="238"/>
        <end position="266"/>
    </location>
</feature>
<feature type="domain" description="4Fe-4S ferredoxin-type 9" evidence="2">
    <location>
        <begin position="276"/>
        <end position="305"/>
    </location>
</feature>
<feature type="domain" description="4Fe-4S ferredoxin-type 10" evidence="2">
    <location>
        <begin position="314"/>
        <end position="345"/>
    </location>
</feature>
<feature type="domain" description="4Fe-4S ferredoxin-type 11" evidence="2">
    <location>
        <begin position="357"/>
        <end position="386"/>
    </location>
</feature>
<feature type="domain" description="4Fe-4S ferredoxin-type 12" evidence="2">
    <location>
        <begin position="385"/>
        <end position="412"/>
    </location>
</feature>
<feature type="binding site" evidence="1">
    <location>
        <position position="9"/>
    </location>
    <ligand>
        <name>[4Fe-4S] cluster</name>
        <dbReference type="ChEBI" id="CHEBI:49883"/>
    </ligand>
</feature>
<feature type="binding site" evidence="1">
    <location>
        <position position="12"/>
    </location>
    <ligand>
        <name>[4Fe-4S] cluster</name>
        <dbReference type="ChEBI" id="CHEBI:49883"/>
    </ligand>
</feature>
<feature type="binding site" evidence="1">
    <location>
        <position position="15"/>
    </location>
    <ligand>
        <name>[4Fe-4S] cluster</name>
        <dbReference type="ChEBI" id="CHEBI:49883"/>
    </ligand>
</feature>
<feature type="binding site" evidence="1">
    <location>
        <position position="19"/>
    </location>
    <ligand>
        <name>[4Fe-4S] cluster</name>
        <dbReference type="ChEBI" id="CHEBI:49883"/>
    </ligand>
</feature>
<feature type="binding site" evidence="1">
    <location>
        <position position="76"/>
    </location>
    <ligand>
        <name>[4Fe-4S] cluster</name>
        <dbReference type="ChEBI" id="CHEBI:49883"/>
    </ligand>
</feature>
<feature type="binding site" evidence="1">
    <location>
        <position position="79"/>
    </location>
    <ligand>
        <name>[4Fe-4S] cluster</name>
        <dbReference type="ChEBI" id="CHEBI:49883"/>
    </ligand>
</feature>
<feature type="binding site" evidence="1">
    <location>
        <position position="82"/>
    </location>
    <ligand>
        <name>[4Fe-4S] cluster</name>
        <dbReference type="ChEBI" id="CHEBI:49883"/>
    </ligand>
</feature>
<feature type="binding site" evidence="1">
    <location>
        <position position="86"/>
    </location>
    <ligand>
        <name>[4Fe-4S] cluster</name>
        <dbReference type="ChEBI" id="CHEBI:49883"/>
    </ligand>
</feature>
<feature type="binding site" evidence="1">
    <location>
        <position position="107"/>
    </location>
    <ligand>
        <name>[4Fe-4S] cluster</name>
        <dbReference type="ChEBI" id="CHEBI:49883"/>
    </ligand>
</feature>
<feature type="binding site" evidence="1">
    <location>
        <position position="110"/>
    </location>
    <ligand>
        <name>[4Fe-4S] cluster</name>
        <dbReference type="ChEBI" id="CHEBI:49883"/>
    </ligand>
</feature>
<feature type="binding site" evidence="1">
    <location>
        <position position="113"/>
    </location>
    <ligand>
        <name>[4Fe-4S] cluster</name>
        <dbReference type="ChEBI" id="CHEBI:49883"/>
    </ligand>
</feature>
<feature type="binding site" evidence="1">
    <location>
        <position position="117"/>
    </location>
    <ligand>
        <name>[4Fe-4S] cluster</name>
        <dbReference type="ChEBI" id="CHEBI:49883"/>
    </ligand>
</feature>
<feature type="binding site" evidence="1">
    <location>
        <position position="146"/>
    </location>
    <ligand>
        <name>[4Fe-4S] cluster</name>
        <dbReference type="ChEBI" id="CHEBI:49883"/>
    </ligand>
</feature>
<feature type="binding site" evidence="1">
    <location>
        <position position="149"/>
    </location>
    <ligand>
        <name>[4Fe-4S] cluster</name>
        <dbReference type="ChEBI" id="CHEBI:49883"/>
    </ligand>
</feature>
<feature type="binding site" evidence="1">
    <location>
        <position position="152"/>
    </location>
    <ligand>
        <name>[4Fe-4S] cluster</name>
        <dbReference type="ChEBI" id="CHEBI:49883"/>
    </ligand>
</feature>
<feature type="binding site" evidence="1">
    <location>
        <position position="156"/>
    </location>
    <ligand>
        <name>[4Fe-4S] cluster</name>
        <dbReference type="ChEBI" id="CHEBI:49883"/>
    </ligand>
</feature>
<feature type="binding site" evidence="1">
    <location>
        <position position="177"/>
    </location>
    <ligand>
        <name>[4Fe-4S] cluster</name>
        <dbReference type="ChEBI" id="CHEBI:49883"/>
    </ligand>
</feature>
<feature type="binding site" evidence="1">
    <location>
        <position position="180"/>
    </location>
    <ligand>
        <name>[4Fe-4S] cluster</name>
        <dbReference type="ChEBI" id="CHEBI:49883"/>
    </ligand>
</feature>
<feature type="binding site" evidence="1">
    <location>
        <position position="183"/>
    </location>
    <ligand>
        <name>[4Fe-4S] cluster</name>
        <dbReference type="ChEBI" id="CHEBI:49883"/>
    </ligand>
</feature>
<feature type="binding site" evidence="1">
    <location>
        <position position="187"/>
    </location>
    <ligand>
        <name>[4Fe-4S] cluster</name>
        <dbReference type="ChEBI" id="CHEBI:49883"/>
    </ligand>
</feature>
<feature type="binding site" evidence="1">
    <location>
        <position position="216"/>
    </location>
    <ligand>
        <name>[4Fe-4S] cluster</name>
        <dbReference type="ChEBI" id="CHEBI:49883"/>
    </ligand>
</feature>
<feature type="binding site" evidence="1">
    <location>
        <position position="219"/>
    </location>
    <ligand>
        <name>[4Fe-4S] cluster</name>
        <dbReference type="ChEBI" id="CHEBI:49883"/>
    </ligand>
</feature>
<feature type="binding site" evidence="1">
    <location>
        <position position="222"/>
    </location>
    <ligand>
        <name>[4Fe-4S] cluster</name>
        <dbReference type="ChEBI" id="CHEBI:49883"/>
    </ligand>
</feature>
<feature type="binding site" evidence="1">
    <location>
        <position position="226"/>
    </location>
    <ligand>
        <name>[4Fe-4S] cluster</name>
        <dbReference type="ChEBI" id="CHEBI:49883"/>
    </ligand>
</feature>
<feature type="binding site" evidence="1">
    <location>
        <position position="246"/>
    </location>
    <ligand>
        <name>[4Fe-4S] cluster</name>
        <dbReference type="ChEBI" id="CHEBI:49883"/>
    </ligand>
</feature>
<feature type="binding site" evidence="1">
    <location>
        <position position="249"/>
    </location>
    <ligand>
        <name>[4Fe-4S] cluster</name>
        <dbReference type="ChEBI" id="CHEBI:49883"/>
    </ligand>
</feature>
<feature type="binding site" evidence="1">
    <location>
        <position position="252"/>
    </location>
    <ligand>
        <name>[4Fe-4S] cluster</name>
        <dbReference type="ChEBI" id="CHEBI:49883"/>
    </ligand>
</feature>
<feature type="binding site" evidence="1">
    <location>
        <position position="256"/>
    </location>
    <ligand>
        <name>[4Fe-4S] cluster</name>
        <dbReference type="ChEBI" id="CHEBI:49883"/>
    </ligand>
</feature>
<feature type="binding site" evidence="1">
    <location>
        <position position="325"/>
    </location>
    <ligand>
        <name>[4Fe-4S] cluster</name>
        <dbReference type="ChEBI" id="CHEBI:49883"/>
    </ligand>
</feature>
<feature type="binding site" evidence="1">
    <location>
        <position position="328"/>
    </location>
    <ligand>
        <name>[4Fe-4S] cluster</name>
        <dbReference type="ChEBI" id="CHEBI:49883"/>
    </ligand>
</feature>
<feature type="binding site" evidence="1">
    <location>
        <position position="331"/>
    </location>
    <ligand>
        <name>[4Fe-4S] cluster</name>
        <dbReference type="ChEBI" id="CHEBI:49883"/>
    </ligand>
</feature>
<feature type="binding site" evidence="1">
    <location>
        <position position="335"/>
    </location>
    <ligand>
        <name>[4Fe-4S] cluster</name>
        <dbReference type="ChEBI" id="CHEBI:49883"/>
    </ligand>
</feature>
<feature type="binding site" evidence="1">
    <location>
        <position position="366"/>
    </location>
    <ligand>
        <name>[4Fe-4S] cluster</name>
        <dbReference type="ChEBI" id="CHEBI:49883"/>
    </ligand>
</feature>
<feature type="binding site" evidence="1">
    <location>
        <position position="369"/>
    </location>
    <ligand>
        <name>[4Fe-4S] cluster</name>
        <dbReference type="ChEBI" id="CHEBI:49883"/>
    </ligand>
</feature>
<feature type="binding site" evidence="1">
    <location>
        <position position="372"/>
    </location>
    <ligand>
        <name>[4Fe-4S] cluster</name>
        <dbReference type="ChEBI" id="CHEBI:49883"/>
    </ligand>
</feature>
<feature type="binding site" evidence="1">
    <location>
        <position position="376"/>
    </location>
    <ligand>
        <name>[4Fe-4S] cluster</name>
        <dbReference type="ChEBI" id="CHEBI:49883"/>
    </ligand>
</feature>
<feature type="binding site" evidence="1">
    <location>
        <position position="394"/>
    </location>
    <ligand>
        <name>[4Fe-4S] cluster</name>
        <dbReference type="ChEBI" id="CHEBI:49883"/>
    </ligand>
</feature>
<feature type="binding site" evidence="1">
    <location>
        <position position="397"/>
    </location>
    <ligand>
        <name>[4Fe-4S] cluster</name>
        <dbReference type="ChEBI" id="CHEBI:49883"/>
    </ligand>
</feature>
<feature type="binding site" evidence="1">
    <location>
        <position position="400"/>
    </location>
    <ligand>
        <name>[4Fe-4S] cluster</name>
        <dbReference type="ChEBI" id="CHEBI:49883"/>
    </ligand>
</feature>
<feature type="binding site" evidence="1">
    <location>
        <position position="404"/>
    </location>
    <ligand>
        <name>[4Fe-4S] cluster</name>
        <dbReference type="ChEBI" id="CHEBI:49883"/>
    </ligand>
</feature>